<sequence>MNPTTPRGGQLWSRCGGCASLLYRKRLRRNLDVCPECGAHSRLDAPARLAQLVDPGSFTALADRAPEVDPIGFVDVLPYPHRLTAARSGTGLAEAVVCGTATVAGSRCVIAVMDFRFLGGSLGCAVGELITQAAERALADRVPLVVVTASGGARMQEGVLSLMQMATVSQAVAALRESGVPSVSVLTDPTYGGVAASFATNTDVVIAESGARMGFAGPRVIRQVTGRELPDGFQTAEFLLRHGQVDLVVPRHALRGCLATLLAAASGGREPVGAGHESECPPVDGSSTQERGADKRDAWETVRLARHPGRPTTLDYLETAFDSFVELHGDRLGADCPAVVGGLAELAGRPVLVVGHQKGHTTGDLMSRNFGMASPAGHRKALRLARLAARWGLPVVTLVDTPGADPGVGAEEQGQAAAIAENILTLTMLPTPVVAVITGEGGSGGALALAVADRVLMLEHAVYSVISPEGCAAILWPDRSAAPQAARALRLTSADLCRLGVVDAVVPEPAPAAHHDPPAAMQAVREAVLAHLVPLLEVPTATLVRRRRRRFRRFGAAGLGARAGAR</sequence>
<keyword id="KW-0067">ATP-binding</keyword>
<keyword id="KW-0963">Cytoplasm</keyword>
<keyword id="KW-0275">Fatty acid biosynthesis</keyword>
<keyword id="KW-0276">Fatty acid metabolism</keyword>
<keyword id="KW-0444">Lipid biosynthesis</keyword>
<keyword id="KW-0443">Lipid metabolism</keyword>
<keyword id="KW-0479">Metal-binding</keyword>
<keyword id="KW-0547">Nucleotide-binding</keyword>
<keyword id="KW-1185">Reference proteome</keyword>
<keyword id="KW-0808">Transferase</keyword>
<keyword id="KW-0862">Zinc</keyword>
<keyword id="KW-0863">Zinc-finger</keyword>
<gene>
    <name type="primary">accD</name>
    <name type="synonym">accA</name>
    <name type="synonym">accDA</name>
    <name type="ordered locus">Strop_2505</name>
</gene>
<reference key="1">
    <citation type="journal article" date="2007" name="Proc. Natl. Acad. Sci. U.S.A.">
        <title>Genome sequencing reveals complex secondary metabolome in the marine actinomycete Salinispora tropica.</title>
        <authorList>
            <person name="Udwary D.W."/>
            <person name="Zeigler L."/>
            <person name="Asolkar R.N."/>
            <person name="Singan V."/>
            <person name="Lapidus A."/>
            <person name="Fenical W."/>
            <person name="Jensen P.R."/>
            <person name="Moore B.S."/>
        </authorList>
    </citation>
    <scope>NUCLEOTIDE SEQUENCE [LARGE SCALE GENOMIC DNA]</scope>
    <source>
        <strain>ATCC BAA-916 / DSM 44818 / JCM 13857 / NBRC 105044 / CNB-440</strain>
    </source>
</reference>
<feature type="chain" id="PRO_0000359117" description="Acetyl-coenzyme A carboxylase carboxyl transferase subunits beta/alpha">
    <location>
        <begin position="1"/>
        <end position="566"/>
    </location>
</feature>
<feature type="domain" description="CoA carboxyltransferase N-terminal" evidence="2">
    <location>
        <begin position="11"/>
        <end position="280"/>
    </location>
</feature>
<feature type="domain" description="CoA carboxyltransferase C-terminal" evidence="3">
    <location>
        <begin position="282"/>
        <end position="534"/>
    </location>
</feature>
<feature type="region of interest" description="Acetyl-coenzyme A carboxylase carboxyl transferase subunit beta" evidence="1">
    <location>
        <begin position="1"/>
        <end position="243"/>
    </location>
</feature>
<feature type="region of interest" description="Carboxyltransferase" evidence="4">
    <location>
        <begin position="11"/>
        <end position="534"/>
    </location>
</feature>
<feature type="region of interest" description="Acetyl-coenzyme A carboxylase carboxyl transferase subunit alpha" evidence="1">
    <location>
        <begin position="244"/>
        <end position="557"/>
    </location>
</feature>
<feature type="region of interest" description="Disordered" evidence="5">
    <location>
        <begin position="268"/>
        <end position="295"/>
    </location>
</feature>
<feature type="binding site" evidence="1">
    <location>
        <position position="15"/>
    </location>
    <ligand>
        <name>Zn(2+)</name>
        <dbReference type="ChEBI" id="CHEBI:29105"/>
    </ligand>
</feature>
<feature type="binding site" evidence="1">
    <location>
        <position position="18"/>
    </location>
    <ligand>
        <name>Zn(2+)</name>
        <dbReference type="ChEBI" id="CHEBI:29105"/>
    </ligand>
</feature>
<feature type="binding site" evidence="1">
    <location>
        <position position="34"/>
    </location>
    <ligand>
        <name>Zn(2+)</name>
        <dbReference type="ChEBI" id="CHEBI:29105"/>
    </ligand>
</feature>
<feature type="binding site" evidence="1">
    <location>
        <position position="37"/>
    </location>
    <ligand>
        <name>Zn(2+)</name>
        <dbReference type="ChEBI" id="CHEBI:29105"/>
    </ligand>
</feature>
<name>ACCDA_SALTO</name>
<comment type="function">
    <text evidence="1">Component of the acetyl coenzyme A carboxylase (ACC) complex. Biotin carboxylase (BC) catalyzes the carboxylation of biotin on its carrier protein (BCCP) and then the CO(2) group is transferred by the transcarboxylase to acetyl-CoA to form malonyl-CoA (By similarity).</text>
</comment>
<comment type="catalytic activity">
    <reaction>
        <text>N(6)-carboxybiotinyl-L-lysyl-[protein] + acetyl-CoA = N(6)-biotinyl-L-lysyl-[protein] + malonyl-CoA</text>
        <dbReference type="Rhea" id="RHEA:54728"/>
        <dbReference type="Rhea" id="RHEA-COMP:10505"/>
        <dbReference type="Rhea" id="RHEA-COMP:10506"/>
        <dbReference type="ChEBI" id="CHEBI:57288"/>
        <dbReference type="ChEBI" id="CHEBI:57384"/>
        <dbReference type="ChEBI" id="CHEBI:83144"/>
        <dbReference type="ChEBI" id="CHEBI:83145"/>
        <dbReference type="EC" id="2.1.3.15"/>
    </reaction>
</comment>
<comment type="cofactor">
    <cofactor evidence="1">
        <name>Zn(2+)</name>
        <dbReference type="ChEBI" id="CHEBI:29105"/>
    </cofactor>
    <text evidence="1">Binds 1 zinc ion per subunit.</text>
</comment>
<comment type="pathway">
    <text>Lipid metabolism; malonyl-CoA biosynthesis; malonyl-CoA from acetyl-CoA: step 1/1.</text>
</comment>
<comment type="subunit">
    <text evidence="1">Acetyl-CoA carboxylase is a heterotetramer composed of biotin carboxyl carrier protein (AccB), biotin carboxylase (AccC) and two subunits of ACCase subunit beta/alpha.</text>
</comment>
<comment type="subcellular location">
    <subcellularLocation>
        <location evidence="1">Cytoplasm</location>
    </subcellularLocation>
</comment>
<comment type="similarity">
    <text evidence="6">In the N-terminal section; belongs to the AccD/PCCB family.</text>
</comment>
<comment type="similarity">
    <text evidence="6">In the C-terminal section; belongs to the AccA family.</text>
</comment>
<proteinExistence type="inferred from homology"/>
<evidence type="ECO:0000250" key="1"/>
<evidence type="ECO:0000255" key="2">
    <source>
        <dbReference type="PROSITE-ProRule" id="PRU01136"/>
    </source>
</evidence>
<evidence type="ECO:0000255" key="3">
    <source>
        <dbReference type="PROSITE-ProRule" id="PRU01137"/>
    </source>
</evidence>
<evidence type="ECO:0000255" key="4">
    <source>
        <dbReference type="PROSITE-ProRule" id="PRU01138"/>
    </source>
</evidence>
<evidence type="ECO:0000256" key="5">
    <source>
        <dbReference type="SAM" id="MobiDB-lite"/>
    </source>
</evidence>
<evidence type="ECO:0000305" key="6"/>
<organism>
    <name type="scientific">Salinispora tropica (strain ATCC BAA-916 / DSM 44818 / JCM 13857 / NBRC 105044 / CNB-440)</name>
    <dbReference type="NCBI Taxonomy" id="369723"/>
    <lineage>
        <taxon>Bacteria</taxon>
        <taxon>Bacillati</taxon>
        <taxon>Actinomycetota</taxon>
        <taxon>Actinomycetes</taxon>
        <taxon>Micromonosporales</taxon>
        <taxon>Micromonosporaceae</taxon>
        <taxon>Salinispora</taxon>
    </lineage>
</organism>
<protein>
    <recommendedName>
        <fullName>Acetyl-coenzyme A carboxylase carboxyl transferase subunits beta/alpha</fullName>
        <shortName>ACCase subunits beta/alpha</shortName>
        <shortName>Acetyl-CoA carboxylase carboxyltransferase subunits beta/alpha</shortName>
        <ecNumber>2.1.3.15</ecNumber>
    </recommendedName>
</protein>
<accession>A4X7V1</accession>
<dbReference type="EC" id="2.1.3.15"/>
<dbReference type="EMBL" id="CP000667">
    <property type="protein sequence ID" value="ABP54951.1"/>
    <property type="molecule type" value="Genomic_DNA"/>
</dbReference>
<dbReference type="RefSeq" id="WP_012013732.1">
    <property type="nucleotide sequence ID" value="NC_009380.1"/>
</dbReference>
<dbReference type="SMR" id="A4X7V1"/>
<dbReference type="STRING" id="369723.Strop_2505"/>
<dbReference type="KEGG" id="stp:Strop_2505"/>
<dbReference type="PATRIC" id="fig|369723.5.peg.2581"/>
<dbReference type="eggNOG" id="COG0777">
    <property type="taxonomic scope" value="Bacteria"/>
</dbReference>
<dbReference type="eggNOG" id="COG0825">
    <property type="taxonomic scope" value="Bacteria"/>
</dbReference>
<dbReference type="HOGENOM" id="CLU_015486_2_0_11"/>
<dbReference type="UniPathway" id="UPA00655">
    <property type="reaction ID" value="UER00711"/>
</dbReference>
<dbReference type="Proteomes" id="UP000000235">
    <property type="component" value="Chromosome"/>
</dbReference>
<dbReference type="GO" id="GO:0009317">
    <property type="term" value="C:acetyl-CoA carboxylase complex"/>
    <property type="evidence" value="ECO:0007669"/>
    <property type="project" value="InterPro"/>
</dbReference>
<dbReference type="GO" id="GO:0003989">
    <property type="term" value="F:acetyl-CoA carboxylase activity"/>
    <property type="evidence" value="ECO:0007669"/>
    <property type="project" value="InterPro"/>
</dbReference>
<dbReference type="GO" id="GO:0005524">
    <property type="term" value="F:ATP binding"/>
    <property type="evidence" value="ECO:0007669"/>
    <property type="project" value="UniProtKB-KW"/>
</dbReference>
<dbReference type="GO" id="GO:0016743">
    <property type="term" value="F:carboxyl- or carbamoyltransferase activity"/>
    <property type="evidence" value="ECO:0007669"/>
    <property type="project" value="UniProtKB-UniRule"/>
</dbReference>
<dbReference type="GO" id="GO:0008270">
    <property type="term" value="F:zinc ion binding"/>
    <property type="evidence" value="ECO:0007669"/>
    <property type="project" value="UniProtKB-UniRule"/>
</dbReference>
<dbReference type="GO" id="GO:0006633">
    <property type="term" value="P:fatty acid biosynthetic process"/>
    <property type="evidence" value="ECO:0007669"/>
    <property type="project" value="UniProtKB-KW"/>
</dbReference>
<dbReference type="GO" id="GO:2001295">
    <property type="term" value="P:malonyl-CoA biosynthetic process"/>
    <property type="evidence" value="ECO:0007669"/>
    <property type="project" value="UniProtKB-UniRule"/>
</dbReference>
<dbReference type="Gene3D" id="3.90.226.10">
    <property type="entry name" value="2-enoyl-CoA Hydratase, Chain A, domain 1"/>
    <property type="match status" value="2"/>
</dbReference>
<dbReference type="HAMAP" id="MF_00823">
    <property type="entry name" value="AcetylCoA_CT_alpha"/>
    <property type="match status" value="1"/>
</dbReference>
<dbReference type="HAMAP" id="MF_01395">
    <property type="entry name" value="AcetylCoA_CT_beta"/>
    <property type="match status" value="1"/>
</dbReference>
<dbReference type="InterPro" id="IPR034733">
    <property type="entry name" value="AcCoA_carboxyl_beta"/>
</dbReference>
<dbReference type="InterPro" id="IPR001095">
    <property type="entry name" value="Acetyl_CoA_COase_a_su"/>
</dbReference>
<dbReference type="InterPro" id="IPR000438">
    <property type="entry name" value="Acetyl_CoA_COase_Trfase_b_su"/>
</dbReference>
<dbReference type="InterPro" id="IPR029045">
    <property type="entry name" value="ClpP/crotonase-like_dom_sf"/>
</dbReference>
<dbReference type="InterPro" id="IPR011763">
    <property type="entry name" value="COA_CT_C"/>
</dbReference>
<dbReference type="InterPro" id="IPR011762">
    <property type="entry name" value="COA_CT_N"/>
</dbReference>
<dbReference type="InterPro" id="IPR041010">
    <property type="entry name" value="Znf-ACC"/>
</dbReference>
<dbReference type="NCBIfam" id="TIGR00513">
    <property type="entry name" value="accA"/>
    <property type="match status" value="1"/>
</dbReference>
<dbReference type="NCBIfam" id="NF041504">
    <property type="entry name" value="AccA_sub"/>
    <property type="match status" value="1"/>
</dbReference>
<dbReference type="NCBIfam" id="NF004344">
    <property type="entry name" value="PRK05724.1"/>
    <property type="match status" value="1"/>
</dbReference>
<dbReference type="PANTHER" id="PTHR42853">
    <property type="entry name" value="ACETYL-COENZYME A CARBOXYLASE CARBOXYL TRANSFERASE SUBUNIT ALPHA"/>
    <property type="match status" value="1"/>
</dbReference>
<dbReference type="PANTHER" id="PTHR42853:SF3">
    <property type="entry name" value="ACETYL-COENZYME A CARBOXYLASE CARBOXYL TRANSFERASE SUBUNIT ALPHA, CHLOROPLASTIC"/>
    <property type="match status" value="1"/>
</dbReference>
<dbReference type="Pfam" id="PF03255">
    <property type="entry name" value="ACCA"/>
    <property type="match status" value="1"/>
</dbReference>
<dbReference type="Pfam" id="PF01039">
    <property type="entry name" value="Carboxyl_trans"/>
    <property type="match status" value="1"/>
</dbReference>
<dbReference type="Pfam" id="PF17848">
    <property type="entry name" value="Zn_ribbon_ACC"/>
    <property type="match status" value="1"/>
</dbReference>
<dbReference type="PRINTS" id="PR01069">
    <property type="entry name" value="ACCCTRFRASEA"/>
</dbReference>
<dbReference type="SUPFAM" id="SSF52096">
    <property type="entry name" value="ClpP/crotonase"/>
    <property type="match status" value="2"/>
</dbReference>
<dbReference type="PROSITE" id="PS50989">
    <property type="entry name" value="COA_CT_CTER"/>
    <property type="match status" value="1"/>
</dbReference>
<dbReference type="PROSITE" id="PS50980">
    <property type="entry name" value="COA_CT_NTER"/>
    <property type="match status" value="1"/>
</dbReference>